<feature type="chain" id="PRO_0000374600" description="tRNA-2-methylthio-N(6)-dimethylallyladenosine synthase">
    <location>
        <begin position="1"/>
        <end position="453"/>
    </location>
</feature>
<feature type="domain" description="MTTase N-terminal" evidence="1">
    <location>
        <begin position="7"/>
        <end position="123"/>
    </location>
</feature>
<feature type="domain" description="Radical SAM core" evidence="2">
    <location>
        <begin position="144"/>
        <end position="381"/>
    </location>
</feature>
<feature type="domain" description="TRAM" evidence="1">
    <location>
        <begin position="384"/>
        <end position="447"/>
    </location>
</feature>
<feature type="binding site" evidence="1">
    <location>
        <position position="16"/>
    </location>
    <ligand>
        <name>[4Fe-4S] cluster</name>
        <dbReference type="ChEBI" id="CHEBI:49883"/>
        <label>1</label>
    </ligand>
</feature>
<feature type="binding site" evidence="1">
    <location>
        <position position="52"/>
    </location>
    <ligand>
        <name>[4Fe-4S] cluster</name>
        <dbReference type="ChEBI" id="CHEBI:49883"/>
        <label>1</label>
    </ligand>
</feature>
<feature type="binding site" evidence="1">
    <location>
        <position position="86"/>
    </location>
    <ligand>
        <name>[4Fe-4S] cluster</name>
        <dbReference type="ChEBI" id="CHEBI:49883"/>
        <label>1</label>
    </ligand>
</feature>
<feature type="binding site" evidence="1">
    <location>
        <position position="158"/>
    </location>
    <ligand>
        <name>[4Fe-4S] cluster</name>
        <dbReference type="ChEBI" id="CHEBI:49883"/>
        <label>2</label>
        <note>4Fe-4S-S-AdoMet</note>
    </ligand>
</feature>
<feature type="binding site" evidence="1">
    <location>
        <position position="162"/>
    </location>
    <ligand>
        <name>[4Fe-4S] cluster</name>
        <dbReference type="ChEBI" id="CHEBI:49883"/>
        <label>2</label>
        <note>4Fe-4S-S-AdoMet</note>
    </ligand>
</feature>
<feature type="binding site" evidence="1">
    <location>
        <position position="165"/>
    </location>
    <ligand>
        <name>[4Fe-4S] cluster</name>
        <dbReference type="ChEBI" id="CHEBI:49883"/>
        <label>2</label>
        <note>4Fe-4S-S-AdoMet</note>
    </ligand>
</feature>
<protein>
    <recommendedName>
        <fullName evidence="1">tRNA-2-methylthio-N(6)-dimethylallyladenosine synthase</fullName>
        <ecNumber evidence="1">2.8.4.3</ecNumber>
    </recommendedName>
    <alternativeName>
        <fullName evidence="1">(Dimethylallyl)adenosine tRNA methylthiotransferase MiaB</fullName>
    </alternativeName>
    <alternativeName>
        <fullName evidence="1">tRNA-i(6)A37 methylthiotransferase</fullName>
    </alternativeName>
</protein>
<dbReference type="EC" id="2.8.4.3" evidence="1"/>
<dbReference type="EMBL" id="CT978603">
    <property type="protein sequence ID" value="CAK27507.1"/>
    <property type="molecule type" value="Genomic_DNA"/>
</dbReference>
<dbReference type="SMR" id="A5GRJ8"/>
<dbReference type="STRING" id="316278.SynRCC307_0604"/>
<dbReference type="KEGG" id="syr:SynRCC307_0604"/>
<dbReference type="eggNOG" id="COG0621">
    <property type="taxonomic scope" value="Bacteria"/>
</dbReference>
<dbReference type="HOGENOM" id="CLU_018697_2_2_3"/>
<dbReference type="OrthoDB" id="9805215at2"/>
<dbReference type="Proteomes" id="UP000001115">
    <property type="component" value="Chromosome"/>
</dbReference>
<dbReference type="GO" id="GO:0005737">
    <property type="term" value="C:cytoplasm"/>
    <property type="evidence" value="ECO:0007669"/>
    <property type="project" value="UniProtKB-SubCell"/>
</dbReference>
<dbReference type="GO" id="GO:0051539">
    <property type="term" value="F:4 iron, 4 sulfur cluster binding"/>
    <property type="evidence" value="ECO:0007669"/>
    <property type="project" value="UniProtKB-UniRule"/>
</dbReference>
<dbReference type="GO" id="GO:0046872">
    <property type="term" value="F:metal ion binding"/>
    <property type="evidence" value="ECO:0007669"/>
    <property type="project" value="UniProtKB-KW"/>
</dbReference>
<dbReference type="GO" id="GO:0035596">
    <property type="term" value="F:methylthiotransferase activity"/>
    <property type="evidence" value="ECO:0007669"/>
    <property type="project" value="InterPro"/>
</dbReference>
<dbReference type="GO" id="GO:0035600">
    <property type="term" value="P:tRNA methylthiolation"/>
    <property type="evidence" value="ECO:0007669"/>
    <property type="project" value="TreeGrafter"/>
</dbReference>
<dbReference type="CDD" id="cd01335">
    <property type="entry name" value="Radical_SAM"/>
    <property type="match status" value="1"/>
</dbReference>
<dbReference type="FunFam" id="3.40.50.12160:FF:000006">
    <property type="entry name" value="tRNA-2-methylthio-N(6)-dimethylallyladenosine synthase"/>
    <property type="match status" value="1"/>
</dbReference>
<dbReference type="FunFam" id="3.80.30.20:FF:000001">
    <property type="entry name" value="tRNA-2-methylthio-N(6)-dimethylallyladenosine synthase 2"/>
    <property type="match status" value="1"/>
</dbReference>
<dbReference type="Gene3D" id="3.40.50.12160">
    <property type="entry name" value="Methylthiotransferase, N-terminal domain"/>
    <property type="match status" value="1"/>
</dbReference>
<dbReference type="Gene3D" id="3.80.30.20">
    <property type="entry name" value="tm_1862 like domain"/>
    <property type="match status" value="1"/>
</dbReference>
<dbReference type="HAMAP" id="MF_01864">
    <property type="entry name" value="tRNA_metthiotr_MiaB"/>
    <property type="match status" value="1"/>
</dbReference>
<dbReference type="InterPro" id="IPR006638">
    <property type="entry name" value="Elp3/MiaA/NifB-like_rSAM"/>
</dbReference>
<dbReference type="InterPro" id="IPR005839">
    <property type="entry name" value="Methylthiotransferase"/>
</dbReference>
<dbReference type="InterPro" id="IPR020612">
    <property type="entry name" value="Methylthiotransferase_CS"/>
</dbReference>
<dbReference type="InterPro" id="IPR013848">
    <property type="entry name" value="Methylthiotransferase_N"/>
</dbReference>
<dbReference type="InterPro" id="IPR038135">
    <property type="entry name" value="Methylthiotransferase_N_sf"/>
</dbReference>
<dbReference type="InterPro" id="IPR006463">
    <property type="entry name" value="MiaB_methiolase"/>
</dbReference>
<dbReference type="InterPro" id="IPR007197">
    <property type="entry name" value="rSAM"/>
</dbReference>
<dbReference type="InterPro" id="IPR023404">
    <property type="entry name" value="rSAM_horseshoe"/>
</dbReference>
<dbReference type="InterPro" id="IPR002792">
    <property type="entry name" value="TRAM_dom"/>
</dbReference>
<dbReference type="NCBIfam" id="TIGR01574">
    <property type="entry name" value="miaB-methiolase"/>
    <property type="match status" value="1"/>
</dbReference>
<dbReference type="NCBIfam" id="TIGR00089">
    <property type="entry name" value="MiaB/RimO family radical SAM methylthiotransferase"/>
    <property type="match status" value="1"/>
</dbReference>
<dbReference type="PANTHER" id="PTHR43020">
    <property type="entry name" value="CDK5 REGULATORY SUBUNIT-ASSOCIATED PROTEIN 1"/>
    <property type="match status" value="1"/>
</dbReference>
<dbReference type="PANTHER" id="PTHR43020:SF2">
    <property type="entry name" value="MITOCHONDRIAL TRNA METHYLTHIOTRANSFERASE CDK5RAP1"/>
    <property type="match status" value="1"/>
</dbReference>
<dbReference type="Pfam" id="PF04055">
    <property type="entry name" value="Radical_SAM"/>
    <property type="match status" value="1"/>
</dbReference>
<dbReference type="Pfam" id="PF01938">
    <property type="entry name" value="TRAM"/>
    <property type="match status" value="1"/>
</dbReference>
<dbReference type="Pfam" id="PF00919">
    <property type="entry name" value="UPF0004"/>
    <property type="match status" value="1"/>
</dbReference>
<dbReference type="SFLD" id="SFLDF00273">
    <property type="entry name" value="(dimethylallyl)adenosine_tRNA"/>
    <property type="match status" value="1"/>
</dbReference>
<dbReference type="SFLD" id="SFLDG01082">
    <property type="entry name" value="B12-binding_domain_containing"/>
    <property type="match status" value="1"/>
</dbReference>
<dbReference type="SFLD" id="SFLDS00029">
    <property type="entry name" value="Radical_SAM"/>
    <property type="match status" value="1"/>
</dbReference>
<dbReference type="SMART" id="SM00729">
    <property type="entry name" value="Elp3"/>
    <property type="match status" value="1"/>
</dbReference>
<dbReference type="SUPFAM" id="SSF102114">
    <property type="entry name" value="Radical SAM enzymes"/>
    <property type="match status" value="1"/>
</dbReference>
<dbReference type="PROSITE" id="PS51449">
    <property type="entry name" value="MTTASE_N"/>
    <property type="match status" value="1"/>
</dbReference>
<dbReference type="PROSITE" id="PS01278">
    <property type="entry name" value="MTTASE_RADICAL"/>
    <property type="match status" value="1"/>
</dbReference>
<dbReference type="PROSITE" id="PS51918">
    <property type="entry name" value="RADICAL_SAM"/>
    <property type="match status" value="1"/>
</dbReference>
<dbReference type="PROSITE" id="PS50926">
    <property type="entry name" value="TRAM"/>
    <property type="match status" value="1"/>
</dbReference>
<comment type="function">
    <text evidence="1">Catalyzes the methylthiolation of N6-(dimethylallyl)adenosine (i(6)A), leading to the formation of 2-methylthio-N6-(dimethylallyl)adenosine (ms(2)i(6)A) at position 37 in tRNAs that read codons beginning with uridine.</text>
</comment>
<comment type="catalytic activity">
    <reaction evidence="1">
        <text>N(6)-dimethylallyladenosine(37) in tRNA + (sulfur carrier)-SH + AH2 + 2 S-adenosyl-L-methionine = 2-methylsulfanyl-N(6)-dimethylallyladenosine(37) in tRNA + (sulfur carrier)-H + 5'-deoxyadenosine + L-methionine + A + S-adenosyl-L-homocysteine + 2 H(+)</text>
        <dbReference type="Rhea" id="RHEA:37067"/>
        <dbReference type="Rhea" id="RHEA-COMP:10375"/>
        <dbReference type="Rhea" id="RHEA-COMP:10376"/>
        <dbReference type="Rhea" id="RHEA-COMP:14737"/>
        <dbReference type="Rhea" id="RHEA-COMP:14739"/>
        <dbReference type="ChEBI" id="CHEBI:13193"/>
        <dbReference type="ChEBI" id="CHEBI:15378"/>
        <dbReference type="ChEBI" id="CHEBI:17319"/>
        <dbReference type="ChEBI" id="CHEBI:17499"/>
        <dbReference type="ChEBI" id="CHEBI:29917"/>
        <dbReference type="ChEBI" id="CHEBI:57844"/>
        <dbReference type="ChEBI" id="CHEBI:57856"/>
        <dbReference type="ChEBI" id="CHEBI:59789"/>
        <dbReference type="ChEBI" id="CHEBI:64428"/>
        <dbReference type="ChEBI" id="CHEBI:74415"/>
        <dbReference type="ChEBI" id="CHEBI:74417"/>
        <dbReference type="EC" id="2.8.4.3"/>
    </reaction>
</comment>
<comment type="cofactor">
    <cofactor evidence="1">
        <name>[4Fe-4S] cluster</name>
        <dbReference type="ChEBI" id="CHEBI:49883"/>
    </cofactor>
    <text evidence="1">Binds 2 [4Fe-4S] clusters. One cluster is coordinated with 3 cysteines and an exchangeable S-adenosyl-L-methionine.</text>
</comment>
<comment type="subunit">
    <text evidence="1">Monomer.</text>
</comment>
<comment type="subcellular location">
    <subcellularLocation>
        <location evidence="1">Cytoplasm</location>
    </subcellularLocation>
</comment>
<comment type="similarity">
    <text evidence="1">Belongs to the methylthiotransferase family. MiaB subfamily.</text>
</comment>
<proteinExistence type="inferred from homology"/>
<gene>
    <name evidence="1" type="primary">miaB</name>
    <name type="ordered locus">SynRCC307_0604</name>
</gene>
<keyword id="KW-0004">4Fe-4S</keyword>
<keyword id="KW-0963">Cytoplasm</keyword>
<keyword id="KW-0408">Iron</keyword>
<keyword id="KW-0411">Iron-sulfur</keyword>
<keyword id="KW-0479">Metal-binding</keyword>
<keyword id="KW-1185">Reference proteome</keyword>
<keyword id="KW-0949">S-adenosyl-L-methionine</keyword>
<keyword id="KW-0808">Transferase</keyword>
<keyword id="KW-0819">tRNA processing</keyword>
<name>MIAB_SYNR3</name>
<evidence type="ECO:0000255" key="1">
    <source>
        <dbReference type="HAMAP-Rule" id="MF_01864"/>
    </source>
</evidence>
<evidence type="ECO:0000255" key="2">
    <source>
        <dbReference type="PROSITE-ProRule" id="PRU01266"/>
    </source>
</evidence>
<sequence length="453" mass="50615">MADSSRGTYWITTFGCQMNKADSERMAGILESMGYCAGSGEDQADLVLYNTCTIRDNAEQKVYSYLGRQARRKRDNPALTLVVAGCVAQQEGESLLRRVPELDLVMGPQHANRLDTLLSQVEAGQQVVATDDHHILEDITTARRDSSLCAWVNVIYGCNERCTYCVVPSVRGQEQSRLPQAIRLEMEGLAASGYKEITLLGQNIDAYGRDLPGITPEGRRQNTLTDLLHHVHDVKGIERIRFATSHPRYFTERLIEACAELPKVCEHFHVPFQSGDDELLKAMARGYTTARYRRIVEQIRKLMPDAAISADAIVGFPGETDAQFRRTLELVDEIGFDLLNTAAYSPRPNTPAADWPDQVEEHVKVERLKELNALVERKAKACSQRYLGRVEEVLAEGINPKDNTQLMGRTRTNRLTFFPAGSHRVGDTVPVRIEQVRAFSLSGSAQAQPALVR</sequence>
<accession>A5GRJ8</accession>
<reference key="1">
    <citation type="submission" date="2006-05" db="EMBL/GenBank/DDBJ databases">
        <authorList>
            <consortium name="Genoscope"/>
        </authorList>
    </citation>
    <scope>NUCLEOTIDE SEQUENCE [LARGE SCALE GENOMIC DNA]</scope>
    <source>
        <strain>RCC307</strain>
    </source>
</reference>
<organism>
    <name type="scientific">Synechococcus sp. (strain RCC307)</name>
    <dbReference type="NCBI Taxonomy" id="316278"/>
    <lineage>
        <taxon>Bacteria</taxon>
        <taxon>Bacillati</taxon>
        <taxon>Cyanobacteriota</taxon>
        <taxon>Cyanophyceae</taxon>
        <taxon>Synechococcales</taxon>
        <taxon>Synechococcaceae</taxon>
        <taxon>Synechococcus</taxon>
    </lineage>
</organism>